<dbReference type="EMBL" id="CU329672">
    <property type="protein sequence ID" value="CAA18991.1"/>
    <property type="molecule type" value="Genomic_DNA"/>
</dbReference>
<dbReference type="PIR" id="T40838">
    <property type="entry name" value="T40838"/>
</dbReference>
<dbReference type="RefSeq" id="NP_587957.1">
    <property type="nucleotide sequence ID" value="NM_001022948.2"/>
</dbReference>
<dbReference type="SMR" id="O59758"/>
<dbReference type="BioGRID" id="275722">
    <property type="interactions" value="4"/>
</dbReference>
<dbReference type="FunCoup" id="O59758">
    <property type="interactions" value="57"/>
</dbReference>
<dbReference type="STRING" id="284812.O59758"/>
<dbReference type="PaxDb" id="4896-SPCC1020.03.1"/>
<dbReference type="EnsemblFungi" id="SPCC1020.03.1">
    <property type="protein sequence ID" value="SPCC1020.03.1:pep"/>
    <property type="gene ID" value="SPCC1020.03"/>
</dbReference>
<dbReference type="PomBase" id="SPCC1020.03"/>
<dbReference type="VEuPathDB" id="FungiDB:SPCC1020.03"/>
<dbReference type="eggNOG" id="KOG1485">
    <property type="taxonomic scope" value="Eukaryota"/>
</dbReference>
<dbReference type="HOGENOM" id="CLU_013430_12_2_1"/>
<dbReference type="InParanoid" id="O59758"/>
<dbReference type="OMA" id="DVMIHIN"/>
<dbReference type="PhylomeDB" id="O59758"/>
<dbReference type="PRO" id="PR:O59758"/>
<dbReference type="Proteomes" id="UP000002485">
    <property type="component" value="Chromosome III"/>
</dbReference>
<dbReference type="GO" id="GO:0016020">
    <property type="term" value="C:membrane"/>
    <property type="evidence" value="ECO:0000318"/>
    <property type="project" value="GO_Central"/>
</dbReference>
<dbReference type="GO" id="GO:0005743">
    <property type="term" value="C:mitochondrial inner membrane"/>
    <property type="evidence" value="ECO:0000266"/>
    <property type="project" value="PomBase"/>
</dbReference>
<dbReference type="GO" id="GO:0005381">
    <property type="term" value="F:iron ion transmembrane transporter activity"/>
    <property type="evidence" value="ECO:0000250"/>
    <property type="project" value="PomBase"/>
</dbReference>
<dbReference type="GO" id="GO:0008324">
    <property type="term" value="F:monoatomic cation transmembrane transporter activity"/>
    <property type="evidence" value="ECO:0000318"/>
    <property type="project" value="GO_Central"/>
</dbReference>
<dbReference type="GO" id="GO:0098771">
    <property type="term" value="P:inorganic ion homeostasis"/>
    <property type="evidence" value="ECO:0007669"/>
    <property type="project" value="UniProtKB-ARBA"/>
</dbReference>
<dbReference type="GO" id="GO:0030003">
    <property type="term" value="P:intracellular monoatomic cation homeostasis"/>
    <property type="evidence" value="ECO:0007669"/>
    <property type="project" value="UniProtKB-ARBA"/>
</dbReference>
<dbReference type="GO" id="GO:0048250">
    <property type="term" value="P:iron import into the mitochondrion"/>
    <property type="evidence" value="ECO:0000250"/>
    <property type="project" value="PomBase"/>
</dbReference>
<dbReference type="FunFam" id="1.20.1510.10:FF:000013">
    <property type="entry name" value="Cation efflux family protein"/>
    <property type="match status" value="1"/>
</dbReference>
<dbReference type="Gene3D" id="1.20.1510.10">
    <property type="entry name" value="Cation efflux protein transmembrane domain"/>
    <property type="match status" value="1"/>
</dbReference>
<dbReference type="InterPro" id="IPR002524">
    <property type="entry name" value="Cation_efflux"/>
</dbReference>
<dbReference type="InterPro" id="IPR027469">
    <property type="entry name" value="Cation_efflux_TMD_sf"/>
</dbReference>
<dbReference type="InterPro" id="IPR050291">
    <property type="entry name" value="CDF_Transporter"/>
</dbReference>
<dbReference type="NCBIfam" id="TIGR01297">
    <property type="entry name" value="CDF"/>
    <property type="match status" value="1"/>
</dbReference>
<dbReference type="PANTHER" id="PTHR43840">
    <property type="entry name" value="MITOCHONDRIAL METAL TRANSPORTER 1-RELATED"/>
    <property type="match status" value="1"/>
</dbReference>
<dbReference type="PANTHER" id="PTHR43840:SF15">
    <property type="entry name" value="MITOCHONDRIAL METAL TRANSPORTER 1-RELATED"/>
    <property type="match status" value="1"/>
</dbReference>
<dbReference type="Pfam" id="PF01545">
    <property type="entry name" value="Cation_efflux"/>
    <property type="match status" value="1"/>
</dbReference>
<dbReference type="SUPFAM" id="SSF161111">
    <property type="entry name" value="Cation efflux protein transmembrane domain-like"/>
    <property type="match status" value="1"/>
</dbReference>
<gene>
    <name type="ORF">SPCC1020.03</name>
</gene>
<name>YJM3_SCHPO</name>
<organism>
    <name type="scientific">Schizosaccharomyces pombe (strain 972 / ATCC 24843)</name>
    <name type="common">Fission yeast</name>
    <dbReference type="NCBI Taxonomy" id="284812"/>
    <lineage>
        <taxon>Eukaryota</taxon>
        <taxon>Fungi</taxon>
        <taxon>Dikarya</taxon>
        <taxon>Ascomycota</taxon>
        <taxon>Taphrinomycotina</taxon>
        <taxon>Schizosaccharomycetes</taxon>
        <taxon>Schizosaccharomycetales</taxon>
        <taxon>Schizosaccharomycetaceae</taxon>
        <taxon>Schizosaccharomyces</taxon>
    </lineage>
</organism>
<protein>
    <recommendedName>
        <fullName>Uncharacterized metal transporter C1020.03</fullName>
    </recommendedName>
</protein>
<reference key="1">
    <citation type="journal article" date="2002" name="Nature">
        <title>The genome sequence of Schizosaccharomyces pombe.</title>
        <authorList>
            <person name="Wood V."/>
            <person name="Gwilliam R."/>
            <person name="Rajandream M.A."/>
            <person name="Lyne M.H."/>
            <person name="Lyne R."/>
            <person name="Stewart A."/>
            <person name="Sgouros J.G."/>
            <person name="Peat N."/>
            <person name="Hayles J."/>
            <person name="Baker S.G."/>
            <person name="Basham D."/>
            <person name="Bowman S."/>
            <person name="Brooks K."/>
            <person name="Brown D."/>
            <person name="Brown S."/>
            <person name="Chillingworth T."/>
            <person name="Churcher C.M."/>
            <person name="Collins M."/>
            <person name="Connor R."/>
            <person name="Cronin A."/>
            <person name="Davis P."/>
            <person name="Feltwell T."/>
            <person name="Fraser A."/>
            <person name="Gentles S."/>
            <person name="Goble A."/>
            <person name="Hamlin N."/>
            <person name="Harris D.E."/>
            <person name="Hidalgo J."/>
            <person name="Hodgson G."/>
            <person name="Holroyd S."/>
            <person name="Hornsby T."/>
            <person name="Howarth S."/>
            <person name="Huckle E.J."/>
            <person name="Hunt S."/>
            <person name="Jagels K."/>
            <person name="James K.D."/>
            <person name="Jones L."/>
            <person name="Jones M."/>
            <person name="Leather S."/>
            <person name="McDonald S."/>
            <person name="McLean J."/>
            <person name="Mooney P."/>
            <person name="Moule S."/>
            <person name="Mungall K.L."/>
            <person name="Murphy L.D."/>
            <person name="Niblett D."/>
            <person name="Odell C."/>
            <person name="Oliver K."/>
            <person name="O'Neil S."/>
            <person name="Pearson D."/>
            <person name="Quail M.A."/>
            <person name="Rabbinowitsch E."/>
            <person name="Rutherford K.M."/>
            <person name="Rutter S."/>
            <person name="Saunders D."/>
            <person name="Seeger K."/>
            <person name="Sharp S."/>
            <person name="Skelton J."/>
            <person name="Simmonds M.N."/>
            <person name="Squares R."/>
            <person name="Squares S."/>
            <person name="Stevens K."/>
            <person name="Taylor K."/>
            <person name="Taylor R.G."/>
            <person name="Tivey A."/>
            <person name="Walsh S.V."/>
            <person name="Warren T."/>
            <person name="Whitehead S."/>
            <person name="Woodward J.R."/>
            <person name="Volckaert G."/>
            <person name="Aert R."/>
            <person name="Robben J."/>
            <person name="Grymonprez B."/>
            <person name="Weltjens I."/>
            <person name="Vanstreels E."/>
            <person name="Rieger M."/>
            <person name="Schaefer M."/>
            <person name="Mueller-Auer S."/>
            <person name="Gabel C."/>
            <person name="Fuchs M."/>
            <person name="Duesterhoeft A."/>
            <person name="Fritzc C."/>
            <person name="Holzer E."/>
            <person name="Moestl D."/>
            <person name="Hilbert H."/>
            <person name="Borzym K."/>
            <person name="Langer I."/>
            <person name="Beck A."/>
            <person name="Lehrach H."/>
            <person name="Reinhardt R."/>
            <person name="Pohl T.M."/>
            <person name="Eger P."/>
            <person name="Zimmermann W."/>
            <person name="Wedler H."/>
            <person name="Wambutt R."/>
            <person name="Purnelle B."/>
            <person name="Goffeau A."/>
            <person name="Cadieu E."/>
            <person name="Dreano S."/>
            <person name="Gloux S."/>
            <person name="Lelaure V."/>
            <person name="Mottier S."/>
            <person name="Galibert F."/>
            <person name="Aves S.J."/>
            <person name="Xiang Z."/>
            <person name="Hunt C."/>
            <person name="Moore K."/>
            <person name="Hurst S.M."/>
            <person name="Lucas M."/>
            <person name="Rochet M."/>
            <person name="Gaillardin C."/>
            <person name="Tallada V.A."/>
            <person name="Garzon A."/>
            <person name="Thode G."/>
            <person name="Daga R.R."/>
            <person name="Cruzado L."/>
            <person name="Jimenez J."/>
            <person name="Sanchez M."/>
            <person name="del Rey F."/>
            <person name="Benito J."/>
            <person name="Dominguez A."/>
            <person name="Revuelta J.L."/>
            <person name="Moreno S."/>
            <person name="Armstrong J."/>
            <person name="Forsburg S.L."/>
            <person name="Cerutti L."/>
            <person name="Lowe T."/>
            <person name="McCombie W.R."/>
            <person name="Paulsen I."/>
            <person name="Potashkin J."/>
            <person name="Shpakovski G.V."/>
            <person name="Ussery D."/>
            <person name="Barrell B.G."/>
            <person name="Nurse P."/>
        </authorList>
    </citation>
    <scope>NUCLEOTIDE SEQUENCE [LARGE SCALE GENOMIC DNA]</scope>
    <source>
        <strain>972 / ATCC 24843</strain>
    </source>
</reference>
<proteinExistence type="inferred from homology"/>
<comment type="subcellular location">
    <subcellularLocation>
        <location evidence="2">Membrane</location>
        <topology evidence="2">Multi-pass membrane protein</topology>
    </subcellularLocation>
</comment>
<comment type="similarity">
    <text evidence="2">Belongs to the cation diffusion facilitator (CDF) transporter (TC 2.A.4) family. SLC30A subfamily.</text>
</comment>
<feature type="chain" id="PRO_0000317148" description="Uncharacterized metal transporter C1020.03">
    <location>
        <begin position="1"/>
        <end position="397"/>
    </location>
</feature>
<feature type="transmembrane region" description="Helical" evidence="1">
    <location>
        <begin position="142"/>
        <end position="162"/>
    </location>
</feature>
<feature type="transmembrane region" description="Helical" evidence="1">
    <location>
        <begin position="191"/>
        <end position="211"/>
    </location>
</feature>
<feature type="transmembrane region" description="Helical" evidence="1">
    <location>
        <begin position="242"/>
        <end position="258"/>
    </location>
</feature>
<feature type="transmembrane region" description="Helical" evidence="1">
    <location>
        <begin position="260"/>
        <end position="280"/>
    </location>
</feature>
<keyword id="KW-0406">Ion transport</keyword>
<keyword id="KW-0472">Membrane</keyword>
<keyword id="KW-1185">Reference proteome</keyword>
<keyword id="KW-0812">Transmembrane</keyword>
<keyword id="KW-1133">Transmembrane helix</keyword>
<keyword id="KW-0813">Transport</keyword>
<sequence>MLKTFNSSARSCRAMPRFLPTLCSRLHEKSGFEIRNAVRMHSVGSHTHTHDHGSDKEMLELVKALKKEGKSPELKLAWLGLYSNIGLAAAKGIGGVALQSSILVADAAHQLGDTLSDLVTLATLKICSKKPTQKYPAGFGKWETIGTFTVSGLLVAVSVGIAHSSLSRLYTILFPYAGSEHTHIGHSHNPSQLLFEHPFMALGLIFGSVVLKEWLFRKTRTVAQKTDSNILLANAWHHRADALTGMVSLLALSGTYFLNAPWLDPFFGCLVSIVVFSAGFNSSKKAFLQLLDRAPSEELRIAVTDALLKGEKLPYKIVTILGNAHAMHVIISVPPSFTSQQSSELAQKVEKTVLDAIPALSSCIVTPLSSDSNQVHRWQHLNGSSGEHSHPSHEHTH</sequence>
<accession>O59758</accession>
<evidence type="ECO:0000255" key="1"/>
<evidence type="ECO:0000305" key="2"/>